<proteinExistence type="inferred from homology"/>
<comment type="function">
    <text evidence="1">Allows the formation of correctly charged Asn-tRNA(Asn) or Gln-tRNA(Gln) through the transamidation of misacylated Asp-tRNA(Asn) or Glu-tRNA(Gln) in organisms which lack either or both of asparaginyl-tRNA or glutaminyl-tRNA synthetases. The reaction takes place in the presence of glutamine and ATP through an activated phospho-Asp-tRNA(Asn) or phospho-Glu-tRNA(Gln).</text>
</comment>
<comment type="catalytic activity">
    <reaction evidence="1">
        <text>L-glutamyl-tRNA(Gln) + L-glutamine + ATP + H2O = L-glutaminyl-tRNA(Gln) + L-glutamate + ADP + phosphate + H(+)</text>
        <dbReference type="Rhea" id="RHEA:17521"/>
        <dbReference type="Rhea" id="RHEA-COMP:9681"/>
        <dbReference type="Rhea" id="RHEA-COMP:9684"/>
        <dbReference type="ChEBI" id="CHEBI:15377"/>
        <dbReference type="ChEBI" id="CHEBI:15378"/>
        <dbReference type="ChEBI" id="CHEBI:29985"/>
        <dbReference type="ChEBI" id="CHEBI:30616"/>
        <dbReference type="ChEBI" id="CHEBI:43474"/>
        <dbReference type="ChEBI" id="CHEBI:58359"/>
        <dbReference type="ChEBI" id="CHEBI:78520"/>
        <dbReference type="ChEBI" id="CHEBI:78521"/>
        <dbReference type="ChEBI" id="CHEBI:456216"/>
    </reaction>
</comment>
<comment type="catalytic activity">
    <reaction evidence="1">
        <text>L-aspartyl-tRNA(Asn) + L-glutamine + ATP + H2O = L-asparaginyl-tRNA(Asn) + L-glutamate + ADP + phosphate + 2 H(+)</text>
        <dbReference type="Rhea" id="RHEA:14513"/>
        <dbReference type="Rhea" id="RHEA-COMP:9674"/>
        <dbReference type="Rhea" id="RHEA-COMP:9677"/>
        <dbReference type="ChEBI" id="CHEBI:15377"/>
        <dbReference type="ChEBI" id="CHEBI:15378"/>
        <dbReference type="ChEBI" id="CHEBI:29985"/>
        <dbReference type="ChEBI" id="CHEBI:30616"/>
        <dbReference type="ChEBI" id="CHEBI:43474"/>
        <dbReference type="ChEBI" id="CHEBI:58359"/>
        <dbReference type="ChEBI" id="CHEBI:78515"/>
        <dbReference type="ChEBI" id="CHEBI:78516"/>
        <dbReference type="ChEBI" id="CHEBI:456216"/>
    </reaction>
</comment>
<comment type="subunit">
    <text evidence="1">Heterotrimer of A, B and C subunits.</text>
</comment>
<comment type="similarity">
    <text evidence="1">Belongs to the GatB/GatE family. GatB subfamily.</text>
</comment>
<reference key="1">
    <citation type="journal article" date="2006" name="Science">
        <title>Genomic islands and the ecology and evolution of Prochlorococcus.</title>
        <authorList>
            <person name="Coleman M.L."/>
            <person name="Sullivan M.B."/>
            <person name="Martiny A.C."/>
            <person name="Steglich C."/>
            <person name="Barry K."/>
            <person name="Delong E.F."/>
            <person name="Chisholm S.W."/>
        </authorList>
    </citation>
    <scope>NUCLEOTIDE SEQUENCE [LARGE SCALE GENOMIC DNA]</scope>
    <source>
        <strain>MIT 9312</strain>
    </source>
</reference>
<keyword id="KW-0067">ATP-binding</keyword>
<keyword id="KW-0436">Ligase</keyword>
<keyword id="KW-0547">Nucleotide-binding</keyword>
<keyword id="KW-0648">Protein biosynthesis</keyword>
<evidence type="ECO:0000255" key="1">
    <source>
        <dbReference type="HAMAP-Rule" id="MF_00121"/>
    </source>
</evidence>
<name>GATB_PROM9</name>
<dbReference type="EC" id="6.3.5.-" evidence="1"/>
<dbReference type="EMBL" id="CP000111">
    <property type="protein sequence ID" value="ABB49110.1"/>
    <property type="molecule type" value="Genomic_DNA"/>
</dbReference>
<dbReference type="RefSeq" id="WP_011375614.1">
    <property type="nucleotide sequence ID" value="NC_007577.1"/>
</dbReference>
<dbReference type="SMR" id="Q31DD5"/>
<dbReference type="STRING" id="74546.PMT9312_0049"/>
<dbReference type="KEGG" id="pmi:PMT9312_0049"/>
<dbReference type="eggNOG" id="COG0064">
    <property type="taxonomic scope" value="Bacteria"/>
</dbReference>
<dbReference type="HOGENOM" id="CLU_019240_0_0_3"/>
<dbReference type="OrthoDB" id="9804078at2"/>
<dbReference type="Proteomes" id="UP000002715">
    <property type="component" value="Chromosome"/>
</dbReference>
<dbReference type="GO" id="GO:0050566">
    <property type="term" value="F:asparaginyl-tRNA synthase (glutamine-hydrolyzing) activity"/>
    <property type="evidence" value="ECO:0007669"/>
    <property type="project" value="RHEA"/>
</dbReference>
<dbReference type="GO" id="GO:0005524">
    <property type="term" value="F:ATP binding"/>
    <property type="evidence" value="ECO:0007669"/>
    <property type="project" value="UniProtKB-KW"/>
</dbReference>
<dbReference type="GO" id="GO:0050567">
    <property type="term" value="F:glutaminyl-tRNA synthase (glutamine-hydrolyzing) activity"/>
    <property type="evidence" value="ECO:0007669"/>
    <property type="project" value="UniProtKB-UniRule"/>
</dbReference>
<dbReference type="GO" id="GO:0070681">
    <property type="term" value="P:glutaminyl-tRNAGln biosynthesis via transamidation"/>
    <property type="evidence" value="ECO:0007669"/>
    <property type="project" value="TreeGrafter"/>
</dbReference>
<dbReference type="GO" id="GO:0006412">
    <property type="term" value="P:translation"/>
    <property type="evidence" value="ECO:0007669"/>
    <property type="project" value="UniProtKB-UniRule"/>
</dbReference>
<dbReference type="FunFam" id="1.10.10.410:FF:000001">
    <property type="entry name" value="Aspartyl/glutamyl-tRNA(Asn/Gln) amidotransferase subunit B"/>
    <property type="match status" value="1"/>
</dbReference>
<dbReference type="FunFam" id="1.10.150.380:FF:000001">
    <property type="entry name" value="Aspartyl/glutamyl-tRNA(Asn/Gln) amidotransferase subunit B"/>
    <property type="match status" value="1"/>
</dbReference>
<dbReference type="Gene3D" id="1.10.10.410">
    <property type="match status" value="1"/>
</dbReference>
<dbReference type="Gene3D" id="1.10.150.380">
    <property type="entry name" value="GatB domain, N-terminal subdomain"/>
    <property type="match status" value="1"/>
</dbReference>
<dbReference type="HAMAP" id="MF_00121">
    <property type="entry name" value="GatB"/>
    <property type="match status" value="1"/>
</dbReference>
<dbReference type="InterPro" id="IPR017959">
    <property type="entry name" value="Asn/Gln-tRNA_amidoTrfase_suB/E"/>
</dbReference>
<dbReference type="InterPro" id="IPR006075">
    <property type="entry name" value="Asn/Gln-tRNA_Trfase_suB/E_cat"/>
</dbReference>
<dbReference type="InterPro" id="IPR018027">
    <property type="entry name" value="Asn/Gln_amidotransferase"/>
</dbReference>
<dbReference type="InterPro" id="IPR003789">
    <property type="entry name" value="Asn/Gln_tRNA_amidoTrase-B-like"/>
</dbReference>
<dbReference type="InterPro" id="IPR004413">
    <property type="entry name" value="GatB"/>
</dbReference>
<dbReference type="InterPro" id="IPR042114">
    <property type="entry name" value="GatB_C_1"/>
</dbReference>
<dbReference type="InterPro" id="IPR023168">
    <property type="entry name" value="GatB_Yqey_C_2"/>
</dbReference>
<dbReference type="InterPro" id="IPR017958">
    <property type="entry name" value="Gln-tRNA_amidoTrfase_suB_CS"/>
</dbReference>
<dbReference type="InterPro" id="IPR014746">
    <property type="entry name" value="Gln_synth/guanido_kin_cat_dom"/>
</dbReference>
<dbReference type="NCBIfam" id="TIGR00133">
    <property type="entry name" value="gatB"/>
    <property type="match status" value="1"/>
</dbReference>
<dbReference type="NCBIfam" id="NF004012">
    <property type="entry name" value="PRK05477.1-2"/>
    <property type="match status" value="1"/>
</dbReference>
<dbReference type="NCBIfam" id="NF004014">
    <property type="entry name" value="PRK05477.1-4"/>
    <property type="match status" value="1"/>
</dbReference>
<dbReference type="PANTHER" id="PTHR11659">
    <property type="entry name" value="GLUTAMYL-TRNA GLN AMIDOTRANSFERASE SUBUNIT B MITOCHONDRIAL AND PROKARYOTIC PET112-RELATED"/>
    <property type="match status" value="1"/>
</dbReference>
<dbReference type="PANTHER" id="PTHR11659:SF0">
    <property type="entry name" value="GLUTAMYL-TRNA(GLN) AMIDOTRANSFERASE SUBUNIT B, MITOCHONDRIAL"/>
    <property type="match status" value="1"/>
</dbReference>
<dbReference type="Pfam" id="PF02934">
    <property type="entry name" value="GatB_N"/>
    <property type="match status" value="1"/>
</dbReference>
<dbReference type="Pfam" id="PF02637">
    <property type="entry name" value="GatB_Yqey"/>
    <property type="match status" value="1"/>
</dbReference>
<dbReference type="SMART" id="SM00845">
    <property type="entry name" value="GatB_Yqey"/>
    <property type="match status" value="1"/>
</dbReference>
<dbReference type="SUPFAM" id="SSF89095">
    <property type="entry name" value="GatB/YqeY motif"/>
    <property type="match status" value="1"/>
</dbReference>
<dbReference type="SUPFAM" id="SSF55931">
    <property type="entry name" value="Glutamine synthetase/guanido kinase"/>
    <property type="match status" value="1"/>
</dbReference>
<dbReference type="PROSITE" id="PS01234">
    <property type="entry name" value="GATB"/>
    <property type="match status" value="1"/>
</dbReference>
<organism>
    <name type="scientific">Prochlorococcus marinus (strain MIT 9312)</name>
    <dbReference type="NCBI Taxonomy" id="74546"/>
    <lineage>
        <taxon>Bacteria</taxon>
        <taxon>Bacillati</taxon>
        <taxon>Cyanobacteriota</taxon>
        <taxon>Cyanophyceae</taxon>
        <taxon>Synechococcales</taxon>
        <taxon>Prochlorococcaceae</taxon>
        <taxon>Prochlorococcus</taxon>
    </lineage>
</organism>
<sequence>MNNLESWEAVIGLETHVQLNTKSKIFTSASTAFGDAPNTHIDPVVCGLPGTLPVLNETVLEYAVKTSLALNLNVAEHCKFDRKQYFYPDLPKNYQISQFDEPLAENGWLEVEIIEKDKDPYTKKIGIERLHMEEDAGKLVHSGSDRLAGSKYSLVDYNRAGIALCEIVSKPDIRTGREAAEYASEIRRTVRYLGVSDGNMQEGSLRCDVNISVRKGPNAPFGTKVEIKNMNSFSAIQKACDYEIARQIEVYENGGEIFQETRLWDEAKQLTKSMRLKEGSSDYRYFPDPDLGPIEITKAQKEIWFNELPELPSKKRNKYVNEFGLSAYDARVISDEINMANFFEETVANGAEAKLASNWVTSDIVGYLKANKLSFSELKLSPENLAEMINMILKNTISGKIAKEILPELIKKNISPKKLVEEKGLAMISDSSSILPIINELINEYPNEVQAFRNGKTKLLGFFIGQLMKRTKGKADPKLANKLLAEKLNG</sequence>
<gene>
    <name evidence="1" type="primary">gatB</name>
    <name type="ordered locus">PMT9312_0049</name>
</gene>
<accession>Q31DD5</accession>
<feature type="chain" id="PRO_0000241254" description="Aspartyl/glutamyl-tRNA(Asn/Gln) amidotransferase subunit B">
    <location>
        <begin position="1"/>
        <end position="490"/>
    </location>
</feature>
<protein>
    <recommendedName>
        <fullName evidence="1">Aspartyl/glutamyl-tRNA(Asn/Gln) amidotransferase subunit B</fullName>
        <shortName evidence="1">Asp/Glu-ADT subunit B</shortName>
        <ecNumber evidence="1">6.3.5.-</ecNumber>
    </recommendedName>
</protein>